<evidence type="ECO:0000255" key="1"/>
<evidence type="ECO:0000269" key="2">
    <source>
    </source>
</evidence>
<evidence type="ECO:0000305" key="3"/>
<evidence type="ECO:0000312" key="4">
    <source>
        <dbReference type="EMBL" id="CAA21920.1"/>
    </source>
</evidence>
<sequence length="497" mass="56058">MEKTEEENYSIKELGEKGSDSQEDVAVIFAEKHPIIDKSLNRKLKLKTDLWVMPLLCLISAFQYMDKSTSNYSSIMGIRTDLNMVGNQYNWVGTSFYLGFMVFSLPLSTLLQKFPLSKVTSAFIVAWGILMTLTCLVHSYASYIATRTLLGILESVITPAFVLFIAQWYRKEEQFFRMAFLVAWNGLGGLIGGSMSYGLYKRELENNLTMSPWRILFIITGLITIINGVFIFIHIPDEPSKAWFLSEKEKDLVLKRLDTDHAGLGSKKFKKYQILEACRDVRMYLYFFLQIAVAIPNGGLSNFSSIMLKNLGYVKGKALLMNMPTSSISFAALTLFGLIPEFTNRRMDIALVGLAINLTSGSLIAFAKPTHAQLAGYWLFGISPIPYICILSCISSNSAGHTKKVFMSAVSMIGYCVGNMVGPQTFRSTQAPKYQGAKVSFVVCYCVAIFIIIAIYAVNVRENRRRDEKNEYLSNELSEEDKKDLTDFENPEFRYSI</sequence>
<proteinExistence type="inferred from homology"/>
<keyword id="KW-0333">Golgi apparatus</keyword>
<keyword id="KW-0472">Membrane</keyword>
<keyword id="KW-1185">Reference proteome</keyword>
<keyword id="KW-0812">Transmembrane</keyword>
<keyword id="KW-1133">Transmembrane helix</keyword>
<keyword id="KW-0813">Transport</keyword>
<dbReference type="EMBL" id="CU329671">
    <property type="protein sequence ID" value="CAA21920.1"/>
    <property type="molecule type" value="Genomic_DNA"/>
</dbReference>
<dbReference type="PIR" id="T39680">
    <property type="entry name" value="T39680"/>
</dbReference>
<dbReference type="SMR" id="O94572"/>
<dbReference type="BioGRID" id="276309">
    <property type="interactions" value="1"/>
</dbReference>
<dbReference type="FunCoup" id="O94572">
    <property type="interactions" value="51"/>
</dbReference>
<dbReference type="iPTMnet" id="O94572"/>
<dbReference type="PaxDb" id="4896-SPBC1773.15.1"/>
<dbReference type="EnsemblFungi" id="SPBC1773.15.1">
    <property type="protein sequence ID" value="SPBC1773.15.1:pep"/>
    <property type="gene ID" value="SPBC1773.15"/>
</dbReference>
<dbReference type="KEGG" id="spo:2539757"/>
<dbReference type="PomBase" id="SPBC1773.15"/>
<dbReference type="VEuPathDB" id="FungiDB:SPBC1773.15"/>
<dbReference type="eggNOG" id="KOG2533">
    <property type="taxonomic scope" value="Eukaryota"/>
</dbReference>
<dbReference type="HOGENOM" id="CLU_001265_0_5_1"/>
<dbReference type="InParanoid" id="O94572"/>
<dbReference type="OMA" id="QENIEFA"/>
<dbReference type="PhylomeDB" id="O94572"/>
<dbReference type="PRO" id="PR:O94572"/>
<dbReference type="Proteomes" id="UP000002485">
    <property type="component" value="Chromosome II"/>
</dbReference>
<dbReference type="GO" id="GO:0032153">
    <property type="term" value="C:cell division site"/>
    <property type="evidence" value="ECO:0007005"/>
    <property type="project" value="PomBase"/>
</dbReference>
<dbReference type="GO" id="GO:0051286">
    <property type="term" value="C:cell tip"/>
    <property type="evidence" value="ECO:0007005"/>
    <property type="project" value="PomBase"/>
</dbReference>
<dbReference type="GO" id="GO:0005794">
    <property type="term" value="C:Golgi apparatus"/>
    <property type="evidence" value="ECO:0007005"/>
    <property type="project" value="PomBase"/>
</dbReference>
<dbReference type="GO" id="GO:0016020">
    <property type="term" value="C:membrane"/>
    <property type="evidence" value="ECO:0000318"/>
    <property type="project" value="GO_Central"/>
</dbReference>
<dbReference type="GO" id="GO:0022857">
    <property type="term" value="F:transmembrane transporter activity"/>
    <property type="evidence" value="ECO:0000318"/>
    <property type="project" value="GO_Central"/>
</dbReference>
<dbReference type="GO" id="GO:0055085">
    <property type="term" value="P:transmembrane transport"/>
    <property type="evidence" value="ECO:0000255"/>
    <property type="project" value="PomBase"/>
</dbReference>
<dbReference type="CDD" id="cd17327">
    <property type="entry name" value="MFS_FEN2_like"/>
    <property type="match status" value="1"/>
</dbReference>
<dbReference type="FunFam" id="1.20.1250.20:FF:000064">
    <property type="entry name" value="MFS allantoate transporter"/>
    <property type="match status" value="1"/>
</dbReference>
<dbReference type="Gene3D" id="1.20.1250.20">
    <property type="entry name" value="MFS general substrate transporter like domains"/>
    <property type="match status" value="1"/>
</dbReference>
<dbReference type="InterPro" id="IPR011701">
    <property type="entry name" value="MFS"/>
</dbReference>
<dbReference type="InterPro" id="IPR020846">
    <property type="entry name" value="MFS_dom"/>
</dbReference>
<dbReference type="InterPro" id="IPR036259">
    <property type="entry name" value="MFS_trans_sf"/>
</dbReference>
<dbReference type="PANTHER" id="PTHR43791:SF1">
    <property type="entry name" value="ALLANTOATE PERMEASE"/>
    <property type="match status" value="1"/>
</dbReference>
<dbReference type="PANTHER" id="PTHR43791">
    <property type="entry name" value="PERMEASE-RELATED"/>
    <property type="match status" value="1"/>
</dbReference>
<dbReference type="Pfam" id="PF07690">
    <property type="entry name" value="MFS_1"/>
    <property type="match status" value="1"/>
</dbReference>
<dbReference type="SUPFAM" id="SSF103473">
    <property type="entry name" value="MFS general substrate transporter"/>
    <property type="match status" value="1"/>
</dbReference>
<dbReference type="PROSITE" id="PS50850">
    <property type="entry name" value="MFS"/>
    <property type="match status" value="1"/>
</dbReference>
<reference evidence="4" key="1">
    <citation type="journal article" date="2002" name="Nature">
        <title>The genome sequence of Schizosaccharomyces pombe.</title>
        <authorList>
            <person name="Wood V."/>
            <person name="Gwilliam R."/>
            <person name="Rajandream M.A."/>
            <person name="Lyne M.H."/>
            <person name="Lyne R."/>
            <person name="Stewart A."/>
            <person name="Sgouros J.G."/>
            <person name="Peat N."/>
            <person name="Hayles J."/>
            <person name="Baker S.G."/>
            <person name="Basham D."/>
            <person name="Bowman S."/>
            <person name="Brooks K."/>
            <person name="Brown D."/>
            <person name="Brown S."/>
            <person name="Chillingworth T."/>
            <person name="Churcher C.M."/>
            <person name="Collins M."/>
            <person name="Connor R."/>
            <person name="Cronin A."/>
            <person name="Davis P."/>
            <person name="Feltwell T."/>
            <person name="Fraser A."/>
            <person name="Gentles S."/>
            <person name="Goble A."/>
            <person name="Hamlin N."/>
            <person name="Harris D.E."/>
            <person name="Hidalgo J."/>
            <person name="Hodgson G."/>
            <person name="Holroyd S."/>
            <person name="Hornsby T."/>
            <person name="Howarth S."/>
            <person name="Huckle E.J."/>
            <person name="Hunt S."/>
            <person name="Jagels K."/>
            <person name="James K.D."/>
            <person name="Jones L."/>
            <person name="Jones M."/>
            <person name="Leather S."/>
            <person name="McDonald S."/>
            <person name="McLean J."/>
            <person name="Mooney P."/>
            <person name="Moule S."/>
            <person name="Mungall K.L."/>
            <person name="Murphy L.D."/>
            <person name="Niblett D."/>
            <person name="Odell C."/>
            <person name="Oliver K."/>
            <person name="O'Neil S."/>
            <person name="Pearson D."/>
            <person name="Quail M.A."/>
            <person name="Rabbinowitsch E."/>
            <person name="Rutherford K.M."/>
            <person name="Rutter S."/>
            <person name="Saunders D."/>
            <person name="Seeger K."/>
            <person name="Sharp S."/>
            <person name="Skelton J."/>
            <person name="Simmonds M.N."/>
            <person name="Squares R."/>
            <person name="Squares S."/>
            <person name="Stevens K."/>
            <person name="Taylor K."/>
            <person name="Taylor R.G."/>
            <person name="Tivey A."/>
            <person name="Walsh S.V."/>
            <person name="Warren T."/>
            <person name="Whitehead S."/>
            <person name="Woodward J.R."/>
            <person name="Volckaert G."/>
            <person name="Aert R."/>
            <person name="Robben J."/>
            <person name="Grymonprez B."/>
            <person name="Weltjens I."/>
            <person name="Vanstreels E."/>
            <person name="Rieger M."/>
            <person name="Schaefer M."/>
            <person name="Mueller-Auer S."/>
            <person name="Gabel C."/>
            <person name="Fuchs M."/>
            <person name="Duesterhoeft A."/>
            <person name="Fritzc C."/>
            <person name="Holzer E."/>
            <person name="Moestl D."/>
            <person name="Hilbert H."/>
            <person name="Borzym K."/>
            <person name="Langer I."/>
            <person name="Beck A."/>
            <person name="Lehrach H."/>
            <person name="Reinhardt R."/>
            <person name="Pohl T.M."/>
            <person name="Eger P."/>
            <person name="Zimmermann W."/>
            <person name="Wedler H."/>
            <person name="Wambutt R."/>
            <person name="Purnelle B."/>
            <person name="Goffeau A."/>
            <person name="Cadieu E."/>
            <person name="Dreano S."/>
            <person name="Gloux S."/>
            <person name="Lelaure V."/>
            <person name="Mottier S."/>
            <person name="Galibert F."/>
            <person name="Aves S.J."/>
            <person name="Xiang Z."/>
            <person name="Hunt C."/>
            <person name="Moore K."/>
            <person name="Hurst S.M."/>
            <person name="Lucas M."/>
            <person name="Rochet M."/>
            <person name="Gaillardin C."/>
            <person name="Tallada V.A."/>
            <person name="Garzon A."/>
            <person name="Thode G."/>
            <person name="Daga R.R."/>
            <person name="Cruzado L."/>
            <person name="Jimenez J."/>
            <person name="Sanchez M."/>
            <person name="del Rey F."/>
            <person name="Benito J."/>
            <person name="Dominguez A."/>
            <person name="Revuelta J.L."/>
            <person name="Moreno S."/>
            <person name="Armstrong J."/>
            <person name="Forsburg S.L."/>
            <person name="Cerutti L."/>
            <person name="Lowe T."/>
            <person name="McCombie W.R."/>
            <person name="Paulsen I."/>
            <person name="Potashkin J."/>
            <person name="Shpakovski G.V."/>
            <person name="Ussery D."/>
            <person name="Barrell B.G."/>
            <person name="Nurse P."/>
        </authorList>
    </citation>
    <scope>NUCLEOTIDE SEQUENCE [LARGE SCALE GENOMIC DNA]</scope>
    <source>
        <strain>972 / ATCC 24843</strain>
    </source>
</reference>
<reference evidence="3" key="2">
    <citation type="journal article" date="2006" name="Nat. Biotechnol.">
        <title>ORFeome cloning and global analysis of protein localization in the fission yeast Schizosaccharomyces pombe.</title>
        <authorList>
            <person name="Matsuyama A."/>
            <person name="Arai R."/>
            <person name="Yashiroda Y."/>
            <person name="Shirai A."/>
            <person name="Kamata A."/>
            <person name="Sekido S."/>
            <person name="Kobayashi Y."/>
            <person name="Hashimoto A."/>
            <person name="Hamamoto M."/>
            <person name="Hiraoka Y."/>
            <person name="Horinouchi S."/>
            <person name="Yoshida M."/>
        </authorList>
    </citation>
    <scope>SUBCELLULAR LOCATION [LARGE SCALE ANALYSIS]</scope>
</reference>
<organism>
    <name type="scientific">Schizosaccharomyces pombe (strain 972 / ATCC 24843)</name>
    <name type="common">Fission yeast</name>
    <dbReference type="NCBI Taxonomy" id="284812"/>
    <lineage>
        <taxon>Eukaryota</taxon>
        <taxon>Fungi</taxon>
        <taxon>Dikarya</taxon>
        <taxon>Ascomycota</taxon>
        <taxon>Taphrinomycotina</taxon>
        <taxon>Schizosaccharomycetes</taxon>
        <taxon>Schizosaccharomycetales</taxon>
        <taxon>Schizosaccharomycetaceae</taxon>
        <taxon>Schizosaccharomyces</taxon>
    </lineage>
</organism>
<protein>
    <recommendedName>
        <fullName>Uncharacterized transporter C1773.15</fullName>
    </recommendedName>
</protein>
<comment type="subcellular location">
    <subcellularLocation>
        <location evidence="2">Golgi apparatus</location>
    </subcellularLocation>
    <subcellularLocation>
        <location evidence="1">Membrane</location>
        <topology evidence="1">Multi-pass membrane protein</topology>
    </subcellularLocation>
    <text evidence="1 2">Barrier septum. Cell tip.</text>
</comment>
<comment type="similarity">
    <text evidence="1">Belongs to the major facilitator superfamily. Allantoate permease family.</text>
</comment>
<gene>
    <name type="ORF">SPBC1773.15</name>
</gene>
<accession>O94572</accession>
<feature type="chain" id="PRO_0000372784" description="Uncharacterized transporter C1773.15">
    <location>
        <begin position="1"/>
        <end position="497"/>
    </location>
</feature>
<feature type="transmembrane region" description="Helical" evidence="1">
    <location>
        <begin position="91"/>
        <end position="111"/>
    </location>
</feature>
<feature type="transmembrane region" description="Helical" evidence="1">
    <location>
        <begin position="119"/>
        <end position="139"/>
    </location>
</feature>
<feature type="transmembrane region" description="Helical" evidence="1">
    <location>
        <begin position="149"/>
        <end position="169"/>
    </location>
</feature>
<feature type="transmembrane region" description="Helical" evidence="1">
    <location>
        <begin position="179"/>
        <end position="199"/>
    </location>
</feature>
<feature type="transmembrane region" description="Helical" evidence="1">
    <location>
        <begin position="215"/>
        <end position="235"/>
    </location>
</feature>
<feature type="transmembrane region" description="Helical" evidence="1">
    <location>
        <begin position="283"/>
        <end position="303"/>
    </location>
</feature>
<feature type="transmembrane region" description="Helical" evidence="1">
    <location>
        <begin position="319"/>
        <end position="339"/>
    </location>
</feature>
<feature type="transmembrane region" description="Helical" evidence="1">
    <location>
        <begin position="347"/>
        <end position="367"/>
    </location>
</feature>
<feature type="transmembrane region" description="Helical" evidence="1">
    <location>
        <begin position="374"/>
        <end position="394"/>
    </location>
</feature>
<feature type="transmembrane region" description="Helical" evidence="1">
    <location>
        <begin position="406"/>
        <end position="426"/>
    </location>
</feature>
<feature type="transmembrane region" description="Helical" evidence="1">
    <location>
        <begin position="439"/>
        <end position="459"/>
    </location>
</feature>
<name>YGDF_SCHPO</name>